<name>MOG1_DICDI</name>
<dbReference type="EMBL" id="AAFI02000082">
    <property type="protein sequence ID" value="EAL64470.1"/>
    <property type="molecule type" value="Genomic_DNA"/>
</dbReference>
<dbReference type="RefSeq" id="XP_637974.1">
    <property type="nucleotide sequence ID" value="XM_632882.1"/>
</dbReference>
<dbReference type="SMR" id="Q54ML6"/>
<dbReference type="FunCoup" id="Q54ML6">
    <property type="interactions" value="383"/>
</dbReference>
<dbReference type="STRING" id="44689.Q54ML6"/>
<dbReference type="PaxDb" id="44689-DDB0237751"/>
<dbReference type="EnsemblProtists" id="EAL64470">
    <property type="protein sequence ID" value="EAL64470"/>
    <property type="gene ID" value="DDB_G0285871"/>
</dbReference>
<dbReference type="GeneID" id="8625326"/>
<dbReference type="KEGG" id="ddi:DDB_G0285871"/>
<dbReference type="dictyBase" id="DDB_G0285871"/>
<dbReference type="VEuPathDB" id="AmoebaDB:DDB_G0285871"/>
<dbReference type="eggNOG" id="KOG3329">
    <property type="taxonomic scope" value="Eukaryota"/>
</dbReference>
<dbReference type="HOGENOM" id="CLU_081345_1_2_1"/>
<dbReference type="InParanoid" id="Q54ML6"/>
<dbReference type="OMA" id="IDTVKVW"/>
<dbReference type="PhylomeDB" id="Q54ML6"/>
<dbReference type="PRO" id="PR:Q54ML6"/>
<dbReference type="Proteomes" id="UP000002195">
    <property type="component" value="Chromosome 4"/>
</dbReference>
<dbReference type="GO" id="GO:0005829">
    <property type="term" value="C:cytosol"/>
    <property type="evidence" value="ECO:0000250"/>
    <property type="project" value="dictyBase"/>
</dbReference>
<dbReference type="GO" id="GO:0005634">
    <property type="term" value="C:nucleus"/>
    <property type="evidence" value="ECO:0000250"/>
    <property type="project" value="dictyBase"/>
</dbReference>
<dbReference type="GO" id="GO:0005085">
    <property type="term" value="F:guanyl-nucleotide exchange factor activity"/>
    <property type="evidence" value="ECO:0000318"/>
    <property type="project" value="GO_Central"/>
</dbReference>
<dbReference type="GO" id="GO:0031267">
    <property type="term" value="F:small GTPase binding"/>
    <property type="evidence" value="ECO:0000250"/>
    <property type="project" value="dictyBase"/>
</dbReference>
<dbReference type="GO" id="GO:0015031">
    <property type="term" value="P:protein transport"/>
    <property type="evidence" value="ECO:0007669"/>
    <property type="project" value="UniProtKB-KW"/>
</dbReference>
<dbReference type="FunFam" id="3.40.1000.10:FF:000004">
    <property type="entry name" value="Probable ran guanine nucleotide release factor"/>
    <property type="match status" value="1"/>
</dbReference>
<dbReference type="Gene3D" id="3.40.1000.10">
    <property type="entry name" value="Mog1/PsbP, alpha/beta/alpha sandwich"/>
    <property type="match status" value="1"/>
</dbReference>
<dbReference type="InterPro" id="IPR007681">
    <property type="entry name" value="Mog1"/>
</dbReference>
<dbReference type="InterPro" id="IPR016123">
    <property type="entry name" value="Mog1/PsbP_a/b/a-sand"/>
</dbReference>
<dbReference type="PANTHER" id="PTHR15837">
    <property type="entry name" value="RAN GUANINE NUCLEOTIDE RELEASE FACTOR"/>
    <property type="match status" value="1"/>
</dbReference>
<dbReference type="PANTHER" id="PTHR15837:SF0">
    <property type="entry name" value="RAN GUANINE NUCLEOTIDE RELEASE FACTOR"/>
    <property type="match status" value="1"/>
</dbReference>
<dbReference type="Pfam" id="PF04603">
    <property type="entry name" value="Mog1"/>
    <property type="match status" value="1"/>
</dbReference>
<dbReference type="SUPFAM" id="SSF55724">
    <property type="entry name" value="Mog1p/PsbP-like"/>
    <property type="match status" value="1"/>
</dbReference>
<protein>
    <recommendedName>
        <fullName>Probable ran guanine nucleotide release factor</fullName>
        <shortName>RanGNRF</shortName>
    </recommendedName>
</protein>
<reference key="1">
    <citation type="journal article" date="2005" name="Nature">
        <title>The genome of the social amoeba Dictyostelium discoideum.</title>
        <authorList>
            <person name="Eichinger L."/>
            <person name="Pachebat J.A."/>
            <person name="Gloeckner G."/>
            <person name="Rajandream M.A."/>
            <person name="Sucgang R."/>
            <person name="Berriman M."/>
            <person name="Song J."/>
            <person name="Olsen R."/>
            <person name="Szafranski K."/>
            <person name="Xu Q."/>
            <person name="Tunggal B."/>
            <person name="Kummerfeld S."/>
            <person name="Madera M."/>
            <person name="Konfortov B.A."/>
            <person name="Rivero F."/>
            <person name="Bankier A.T."/>
            <person name="Lehmann R."/>
            <person name="Hamlin N."/>
            <person name="Davies R."/>
            <person name="Gaudet P."/>
            <person name="Fey P."/>
            <person name="Pilcher K."/>
            <person name="Chen G."/>
            <person name="Saunders D."/>
            <person name="Sodergren E.J."/>
            <person name="Davis P."/>
            <person name="Kerhornou A."/>
            <person name="Nie X."/>
            <person name="Hall N."/>
            <person name="Anjard C."/>
            <person name="Hemphill L."/>
            <person name="Bason N."/>
            <person name="Farbrother P."/>
            <person name="Desany B."/>
            <person name="Just E."/>
            <person name="Morio T."/>
            <person name="Rost R."/>
            <person name="Churcher C.M."/>
            <person name="Cooper J."/>
            <person name="Haydock S."/>
            <person name="van Driessche N."/>
            <person name="Cronin A."/>
            <person name="Goodhead I."/>
            <person name="Muzny D.M."/>
            <person name="Mourier T."/>
            <person name="Pain A."/>
            <person name="Lu M."/>
            <person name="Harper D."/>
            <person name="Lindsay R."/>
            <person name="Hauser H."/>
            <person name="James K.D."/>
            <person name="Quiles M."/>
            <person name="Madan Babu M."/>
            <person name="Saito T."/>
            <person name="Buchrieser C."/>
            <person name="Wardroper A."/>
            <person name="Felder M."/>
            <person name="Thangavelu M."/>
            <person name="Johnson D."/>
            <person name="Knights A."/>
            <person name="Loulseged H."/>
            <person name="Mungall K.L."/>
            <person name="Oliver K."/>
            <person name="Price C."/>
            <person name="Quail M.A."/>
            <person name="Urushihara H."/>
            <person name="Hernandez J."/>
            <person name="Rabbinowitsch E."/>
            <person name="Steffen D."/>
            <person name="Sanders M."/>
            <person name="Ma J."/>
            <person name="Kohara Y."/>
            <person name="Sharp S."/>
            <person name="Simmonds M.N."/>
            <person name="Spiegler S."/>
            <person name="Tivey A."/>
            <person name="Sugano S."/>
            <person name="White B."/>
            <person name="Walker D."/>
            <person name="Woodward J.R."/>
            <person name="Winckler T."/>
            <person name="Tanaka Y."/>
            <person name="Shaulsky G."/>
            <person name="Schleicher M."/>
            <person name="Weinstock G.M."/>
            <person name="Rosenthal A."/>
            <person name="Cox E.C."/>
            <person name="Chisholm R.L."/>
            <person name="Gibbs R.A."/>
            <person name="Loomis W.F."/>
            <person name="Platzer M."/>
            <person name="Kay R.R."/>
            <person name="Williams J.G."/>
            <person name="Dear P.H."/>
            <person name="Noegel A.A."/>
            <person name="Barrell B.G."/>
            <person name="Kuspa A."/>
        </authorList>
    </citation>
    <scope>NUCLEOTIDE SEQUENCE [LARGE SCALE GENOMIC DNA]</scope>
    <source>
        <strain>AX4</strain>
    </source>
</reference>
<evidence type="ECO:0000250" key="1"/>
<evidence type="ECO:0000305" key="2"/>
<organism>
    <name type="scientific">Dictyostelium discoideum</name>
    <name type="common">Social amoeba</name>
    <dbReference type="NCBI Taxonomy" id="44689"/>
    <lineage>
        <taxon>Eukaryota</taxon>
        <taxon>Amoebozoa</taxon>
        <taxon>Evosea</taxon>
        <taxon>Eumycetozoa</taxon>
        <taxon>Dictyostelia</taxon>
        <taxon>Dictyosteliales</taxon>
        <taxon>Dictyosteliaceae</taxon>
        <taxon>Dictyostelium</taxon>
    </lineage>
</organism>
<comment type="function">
    <text evidence="1">May regulate the intracellular trafficking of ran.</text>
</comment>
<comment type="similarity">
    <text evidence="2">Belongs to the MOG1 family.</text>
</comment>
<sequence length="195" mass="22257">MSETFEKRQLYGGAIEIDIPRRFIDVTSYRHIPDHQELFSDEKSDQSVIIELNEFQDHISNANAIKHHYEVLVEDAGISTDKSVILNFRELTQAEMPNFDASIPKYVLLAQQKIAKFNETAENTINIYMALVRLEKSKTDLLITFNEAIALAPTSSSVAVVQNLTPSNDQSKSEQLFLTMLKSFKIKDYSLFVHN</sequence>
<accession>Q54ML6</accession>
<proteinExistence type="inferred from homology"/>
<gene>
    <name type="primary">mog1</name>
    <name type="ORF">DDB_G0285871</name>
</gene>
<keyword id="KW-0344">Guanine-nucleotide releasing factor</keyword>
<keyword id="KW-0653">Protein transport</keyword>
<keyword id="KW-1185">Reference proteome</keyword>
<keyword id="KW-0813">Transport</keyword>
<feature type="chain" id="PRO_0000330638" description="Probable ran guanine nucleotide release factor">
    <location>
        <begin position="1"/>
        <end position="195"/>
    </location>
</feature>